<sequence length="225" mass="25152">MSQYGFVRVPREVEKAIPVVNAPRPRAVVPPPNSETARLVREYAAKELTAPVLNHSLRVFQYSVAIIRDQFPAWDLDQEVLYVTCLLHDIATTDKNMRATKMSFEYYGGILSRELVFNATGGNQDYADAVTEAIIRHQDLTGTGYITTLGLILQIATTLDNVGSNTDLIHIDTVSAINEQFPRLHWLSCFATVVDTENSRKPWGHTSSLGDDFSKKVICNTFGYN</sequence>
<organism>
    <name type="scientific">Saccharomyces cerevisiae (strain ATCC 204508 / S288c)</name>
    <name type="common">Baker's yeast</name>
    <dbReference type="NCBI Taxonomy" id="559292"/>
    <lineage>
        <taxon>Eukaryota</taxon>
        <taxon>Fungi</taxon>
        <taxon>Dikarya</taxon>
        <taxon>Ascomycota</taxon>
        <taxon>Saccharomycotina</taxon>
        <taxon>Saccharomycetes</taxon>
        <taxon>Saccharomycetales</taxon>
        <taxon>Saccharomycetaceae</taxon>
        <taxon>Saccharomyces</taxon>
    </lineage>
</organism>
<comment type="function">
    <text evidence="4">Cyanamide hydratase involved in the detoxification and/or utilization of cyanamide, a toxic nitrile compound distributed widely in the environment.</text>
</comment>
<comment type="catalytic activity">
    <reaction evidence="4">
        <text>urea = cyanamide + H2O</text>
        <dbReference type="Rhea" id="RHEA:23056"/>
        <dbReference type="ChEBI" id="CHEBI:15377"/>
        <dbReference type="ChEBI" id="CHEBI:16199"/>
        <dbReference type="ChEBI" id="CHEBI:16698"/>
        <dbReference type="EC" id="4.2.1.69"/>
    </reaction>
</comment>
<comment type="cofactor">
    <cofactor evidence="1">
        <name>Zn(2+)</name>
        <dbReference type="ChEBI" id="CHEBI:29105"/>
    </cofactor>
</comment>
<comment type="biophysicochemical properties">
    <kinetics>
        <KM evidence="4">17.3 mM for cyanamide</KM>
    </kinetics>
</comment>
<comment type="subunit">
    <text evidence="1">Homohexamer.</text>
</comment>
<comment type="induction">
    <text evidence="3 4">Expression is induced by DNA-damaging agents such as methyl methanesulfonate (MMS) or dimethyl sulfate (DMS) (PubMed:18485869, PubMed:25847245). Massively induced by cyanamide (PubMed:25847245).</text>
</comment>
<comment type="disruption phenotype">
    <text evidence="4">The double deletion of DDI2 and DDI3 compromizes cellular resistance to cyanamide by impairing its metabolization.</text>
</comment>
<comment type="miscellaneous">
    <text evidence="6">DDI2 and DDI3 are duplicated genes located on different chromosomes, with identical ORF sequences and only one nucleotide difference in their promoter (up to 1 kb) regions.</text>
</comment>
<comment type="similarity">
    <text evidence="7">Belongs to the cyanamide dehydrase family.</text>
</comment>
<evidence type="ECO:0000250" key="1">
    <source>
        <dbReference type="UniProtKB" id="P22143"/>
    </source>
</evidence>
<evidence type="ECO:0000255" key="2">
    <source>
        <dbReference type="PROSITE-ProRule" id="PRU01175"/>
    </source>
</evidence>
<evidence type="ECO:0000269" key="3">
    <source>
    </source>
</evidence>
<evidence type="ECO:0000269" key="4">
    <source>
    </source>
</evidence>
<evidence type="ECO:0000303" key="5">
    <source>
    </source>
</evidence>
<evidence type="ECO:0000303" key="6">
    <source>
    </source>
</evidence>
<evidence type="ECO:0000305" key="7"/>
<evidence type="ECO:0000312" key="8">
    <source>
        <dbReference type="SGD" id="S000001833"/>
    </source>
</evidence>
<feature type="chain" id="PRO_0000202670" description="Cyanamide hydratase DDI2">
    <location>
        <begin position="1"/>
        <end position="225"/>
    </location>
</feature>
<feature type="domain" description="HD" evidence="2">
    <location>
        <begin position="52"/>
        <end position="162"/>
    </location>
</feature>
<dbReference type="EC" id="4.2.1.69" evidence="4"/>
<dbReference type="EMBL" id="D50617">
    <property type="protein sequence ID" value="BAA09180.1"/>
    <property type="molecule type" value="Genomic_DNA"/>
</dbReference>
<dbReference type="EMBL" id="AY692638">
    <property type="protein sequence ID" value="AAT92657.1"/>
    <property type="molecule type" value="Genomic_DNA"/>
</dbReference>
<dbReference type="EMBL" id="BK006940">
    <property type="protein sequence ID" value="DAA12379.1"/>
    <property type="molecule type" value="Genomic_DNA"/>
</dbReference>
<dbReference type="PIR" id="S56194">
    <property type="entry name" value="S56194"/>
</dbReference>
<dbReference type="RefSeq" id="NP_014064.1">
    <property type="nucleotide sequence ID" value="NM_001183173.1"/>
</dbReference>
<dbReference type="RefSeq" id="NP_116594.1">
    <property type="nucleotide sequence ID" value="NM_001179906.1"/>
</dbReference>
<dbReference type="SMR" id="P0CH63"/>
<dbReference type="BioGRID" id="31086">
    <property type="interactions" value="49"/>
</dbReference>
<dbReference type="BioGRID" id="35506">
    <property type="interactions" value="4"/>
</dbReference>
<dbReference type="FunCoup" id="P0CH63">
    <property type="interactions" value="38"/>
</dbReference>
<dbReference type="STRING" id="4932.YFL061W"/>
<dbReference type="PaxDb" id="4932-YFL061W"/>
<dbReference type="PeptideAtlas" id="P0CH63"/>
<dbReference type="EnsemblFungi" id="YFL061W_mRNA">
    <property type="protein sequence ID" value="YFL061W"/>
    <property type="gene ID" value="YFL061W"/>
</dbReference>
<dbReference type="EnsemblFungi" id="YNL335W_mRNA">
    <property type="protein sequence ID" value="YNL335W"/>
    <property type="gene ID" value="YNL335W"/>
</dbReference>
<dbReference type="GeneID" id="850483"/>
<dbReference type="GeneID" id="855381"/>
<dbReference type="KEGG" id="sce:YFL061W"/>
<dbReference type="KEGG" id="sce:YNL335W"/>
<dbReference type="AGR" id="SGD:S000001833"/>
<dbReference type="SGD" id="S000001833">
    <property type="gene designation" value="DDI2"/>
</dbReference>
<dbReference type="VEuPathDB" id="FungiDB:YFL061W"/>
<dbReference type="VEuPathDB" id="FungiDB:YNL335W"/>
<dbReference type="eggNOG" id="ENOG502QTPD">
    <property type="taxonomic scope" value="Eukaryota"/>
</dbReference>
<dbReference type="HOGENOM" id="CLU_079935_0_0_1"/>
<dbReference type="InParanoid" id="P0CH63"/>
<dbReference type="OMA" id="PWAHTTH"/>
<dbReference type="OrthoDB" id="10033309at2759"/>
<dbReference type="BioCyc" id="YEAST:G3O-30406-MONOMER"/>
<dbReference type="SABIO-RK" id="P0CH63"/>
<dbReference type="PRO" id="PR:P0CH63"/>
<dbReference type="Proteomes" id="UP000002311">
    <property type="component" value="Chromosome VI"/>
</dbReference>
<dbReference type="RNAct" id="P0CH63">
    <property type="molecule type" value="protein"/>
</dbReference>
<dbReference type="ExpressionAtlas" id="P0CH63">
    <property type="expression patterns" value="baseline and differential"/>
</dbReference>
<dbReference type="GO" id="GO:0018820">
    <property type="term" value="F:cyanamide hydratase activity"/>
    <property type="evidence" value="ECO:0000314"/>
    <property type="project" value="SGD"/>
</dbReference>
<dbReference type="GO" id="GO:0008270">
    <property type="term" value="F:zinc ion binding"/>
    <property type="evidence" value="ECO:0000250"/>
    <property type="project" value="UniProtKB"/>
</dbReference>
<dbReference type="GO" id="GO:0018890">
    <property type="term" value="P:cyanamide metabolic process"/>
    <property type="evidence" value="ECO:0000315"/>
    <property type="project" value="SGD"/>
</dbReference>
<dbReference type="CDD" id="cd00077">
    <property type="entry name" value="HDc"/>
    <property type="match status" value="1"/>
</dbReference>
<dbReference type="FunFam" id="1.10.3210.10:FF:000027">
    <property type="entry name" value="Urea hydro-lyase/cyanamide hydratase"/>
    <property type="match status" value="1"/>
</dbReference>
<dbReference type="Gene3D" id="1.10.3210.10">
    <property type="entry name" value="Hypothetical protein af1432"/>
    <property type="match status" value="1"/>
</dbReference>
<dbReference type="InterPro" id="IPR017771">
    <property type="entry name" value="Cyanamide_hydratase_HD"/>
</dbReference>
<dbReference type="InterPro" id="IPR003607">
    <property type="entry name" value="HD/PDEase_dom"/>
</dbReference>
<dbReference type="InterPro" id="IPR006674">
    <property type="entry name" value="HD_domain"/>
</dbReference>
<dbReference type="NCBIfam" id="TIGR03401">
    <property type="entry name" value="cyanamide_fam"/>
    <property type="match status" value="1"/>
</dbReference>
<dbReference type="PANTHER" id="PTHR35569">
    <property type="entry name" value="CYANAMIDE HYDRATASE DDI2-RELATED"/>
    <property type="match status" value="1"/>
</dbReference>
<dbReference type="PANTHER" id="PTHR35569:SF1">
    <property type="entry name" value="CYANAMIDE HYDRATASE DDI2-RELATED"/>
    <property type="match status" value="1"/>
</dbReference>
<dbReference type="Pfam" id="PF01966">
    <property type="entry name" value="HD"/>
    <property type="match status" value="1"/>
</dbReference>
<dbReference type="SMART" id="SM00471">
    <property type="entry name" value="HDc"/>
    <property type="match status" value="1"/>
</dbReference>
<dbReference type="SUPFAM" id="SSF109604">
    <property type="entry name" value="HD-domain/PDEase-like"/>
    <property type="match status" value="1"/>
</dbReference>
<dbReference type="PROSITE" id="PS51831">
    <property type="entry name" value="HD"/>
    <property type="match status" value="1"/>
</dbReference>
<reference key="1">
    <citation type="journal article" date="1995" name="Nat. Genet.">
        <title>Analysis of the nucleotide sequence of chromosome VI from Saccharomyces cerevisiae.</title>
        <authorList>
            <person name="Murakami Y."/>
            <person name="Naitou M."/>
            <person name="Hagiwara H."/>
            <person name="Shibata T."/>
            <person name="Ozawa M."/>
            <person name="Sasanuma S."/>
            <person name="Sasanuma M."/>
            <person name="Tsuchiya Y."/>
            <person name="Soeda E."/>
            <person name="Yokoyama K."/>
            <person name="Yamazaki M."/>
            <person name="Tashiro H."/>
            <person name="Eki T."/>
        </authorList>
    </citation>
    <scope>NUCLEOTIDE SEQUENCE [LARGE SCALE GENOMIC DNA]</scope>
    <source>
        <strain>ATCC 204508 / S288c</strain>
    </source>
</reference>
<reference key="2">
    <citation type="journal article" date="2014" name="G3 (Bethesda)">
        <title>The reference genome sequence of Saccharomyces cerevisiae: Then and now.</title>
        <authorList>
            <person name="Engel S.R."/>
            <person name="Dietrich F.S."/>
            <person name="Fisk D.G."/>
            <person name="Binkley G."/>
            <person name="Balakrishnan R."/>
            <person name="Costanzo M.C."/>
            <person name="Dwight S.S."/>
            <person name="Hitz B.C."/>
            <person name="Karra K."/>
            <person name="Nash R.S."/>
            <person name="Weng S."/>
            <person name="Wong E.D."/>
            <person name="Lloyd P."/>
            <person name="Skrzypek M.S."/>
            <person name="Miyasato S.R."/>
            <person name="Simison M."/>
            <person name="Cherry J.M."/>
        </authorList>
    </citation>
    <scope>GENOME REANNOTATION</scope>
    <source>
        <strain>ATCC 204508 / S288c</strain>
    </source>
</reference>
<reference key="3">
    <citation type="journal article" date="2007" name="Genome Res.">
        <title>Approaching a complete repository of sequence-verified protein-encoding clones for Saccharomyces cerevisiae.</title>
        <authorList>
            <person name="Hu Y."/>
            <person name="Rolfs A."/>
            <person name="Bhullar B."/>
            <person name="Murthy T.V.S."/>
            <person name="Zhu C."/>
            <person name="Berger M.F."/>
            <person name="Camargo A.A."/>
            <person name="Kelley F."/>
            <person name="McCarron S."/>
            <person name="Jepson D."/>
            <person name="Richardson A."/>
            <person name="Raphael J."/>
            <person name="Moreira D."/>
            <person name="Taycher E."/>
            <person name="Zuo D."/>
            <person name="Mohr S."/>
            <person name="Kane M.F."/>
            <person name="Williamson J."/>
            <person name="Simpson A.J.G."/>
            <person name="Bulyk M.L."/>
            <person name="Harlow E."/>
            <person name="Marsischky G."/>
            <person name="Kolodner R.D."/>
            <person name="LaBaer J."/>
        </authorList>
    </citation>
    <scope>NUCLEOTIDE SEQUENCE [GENOMIC DNA]</scope>
    <source>
        <strain>ATCC 204508 / S288c</strain>
    </source>
</reference>
<reference key="4">
    <citation type="journal article" date="2008" name="Cell">
        <title>Rad6-Rad18 mediates a eukaryotic SOS response by ubiquitinating the 9-1-1 checkpoint clamp.</title>
        <authorList>
            <person name="Fu Y."/>
            <person name="Zhu Y."/>
            <person name="Zhang K."/>
            <person name="Yeung M."/>
            <person name="Durocher D."/>
            <person name="Xiao W."/>
        </authorList>
    </citation>
    <scope>INDUCTION</scope>
</reference>
<reference key="5">
    <citation type="journal article" date="2015" name="J. Biol. Chem.">
        <title>Two duplicated genes DDI2 and DDI3 in budding yeast encode a cyanamide hydratase and are induced by cyanamide.</title>
        <authorList>
            <person name="Li J."/>
            <person name="Biss M."/>
            <person name="Fu Y."/>
            <person name="Xu X."/>
            <person name="Moore S.A."/>
            <person name="Xiao W."/>
        </authorList>
    </citation>
    <scope>INDUCTION</scope>
    <scope>FUNCTION</scope>
    <scope>DISRUPTION PHENOTYPE</scope>
    <scope>CATALYTIC ACTIVITY</scope>
    <scope>BIOPHYSICOCHEMICAL PROPERTIES</scope>
</reference>
<accession>P0CH63</accession>
<accession>D6VTG9</accession>
<accession>P43543</accession>
<name>DDI2_YEAST</name>
<keyword id="KW-0456">Lyase</keyword>
<keyword id="KW-1185">Reference proteome</keyword>
<keyword id="KW-0862">Zinc</keyword>
<gene>
    <name evidence="5" type="primary">DDI2</name>
    <name evidence="8" type="ordered locus">YFL061W</name>
</gene>
<protein>
    <recommendedName>
        <fullName evidence="6">Cyanamide hydratase DDI2</fullName>
        <shortName evidence="6">CAH</shortName>
        <ecNumber evidence="4">4.2.1.69</ecNumber>
    </recommendedName>
    <alternativeName>
        <fullName evidence="5">DNA damage-inducible protein 2</fullName>
    </alternativeName>
</protein>
<proteinExistence type="evidence at protein level"/>